<sequence length="240" mass="26188">MSLLSIAALDLALGGHLVLENVHLTLERGEIVTIVGPNGSGKTTLLKSIIGALTPQRGCIDKSPGMVIGYVPQRLHLDATLPMTVSRLMRLPRRRPTHEIETALDRAGVTQQASSQVSDLSGGQFQRVLLARALLSSPDLLILDEATQGLDQQGMADFYRQIERVRHELGCAVLMVSHELHVVMRASDRVICLNRSICCAGTPERVAASPAYRAMFGLDDEDALALYRHHHSRSSLEMSP</sequence>
<gene>
    <name evidence="1" type="primary">znuC</name>
    <name type="ordered locus">Csal_0189</name>
</gene>
<proteinExistence type="inferred from homology"/>
<feature type="chain" id="PRO_0000281499" description="Zinc import ATP-binding protein ZnuC">
    <location>
        <begin position="1"/>
        <end position="240"/>
    </location>
</feature>
<feature type="domain" description="ABC transporter" evidence="1">
    <location>
        <begin position="1"/>
        <end position="219"/>
    </location>
</feature>
<feature type="binding site" evidence="1">
    <location>
        <begin position="36"/>
        <end position="43"/>
    </location>
    <ligand>
        <name>ATP</name>
        <dbReference type="ChEBI" id="CHEBI:30616"/>
    </ligand>
</feature>
<evidence type="ECO:0000255" key="1">
    <source>
        <dbReference type="HAMAP-Rule" id="MF_01725"/>
    </source>
</evidence>
<evidence type="ECO:0000305" key="2"/>
<accession>Q1R155</accession>
<reference key="1">
    <citation type="journal article" date="2011" name="Stand. Genomic Sci.">
        <title>Complete genome sequence of the halophilic and highly halotolerant Chromohalobacter salexigens type strain (1H11(T)).</title>
        <authorList>
            <person name="Copeland A."/>
            <person name="O'Connor K."/>
            <person name="Lucas S."/>
            <person name="Lapidus A."/>
            <person name="Berry K.W."/>
            <person name="Detter J.C."/>
            <person name="Del Rio T.G."/>
            <person name="Hammon N."/>
            <person name="Dalin E."/>
            <person name="Tice H."/>
            <person name="Pitluck S."/>
            <person name="Bruce D."/>
            <person name="Goodwin L."/>
            <person name="Han C."/>
            <person name="Tapia R."/>
            <person name="Saunders E."/>
            <person name="Schmutz J."/>
            <person name="Brettin T."/>
            <person name="Larimer F."/>
            <person name="Land M."/>
            <person name="Hauser L."/>
            <person name="Vargas C."/>
            <person name="Nieto J.J."/>
            <person name="Kyrpides N.C."/>
            <person name="Ivanova N."/>
            <person name="Goker M."/>
            <person name="Klenk H.P."/>
            <person name="Csonka L.N."/>
            <person name="Woyke T."/>
        </authorList>
    </citation>
    <scope>NUCLEOTIDE SEQUENCE [LARGE SCALE GENOMIC DNA]</scope>
    <source>
        <strain>ATCC BAA-138 / DSM 3043 / CIP 106854 / NCIMB 13768 / 1H11</strain>
    </source>
</reference>
<comment type="function">
    <text evidence="1">Part of the ABC transporter complex ZnuABC involved in zinc import. Responsible for energy coupling to the transport system.</text>
</comment>
<comment type="catalytic activity">
    <reaction evidence="1">
        <text>Zn(2+)(out) + ATP(in) + H2O(in) = Zn(2+)(in) + ADP(in) + phosphate(in) + H(+)(in)</text>
        <dbReference type="Rhea" id="RHEA:29795"/>
        <dbReference type="ChEBI" id="CHEBI:15377"/>
        <dbReference type="ChEBI" id="CHEBI:15378"/>
        <dbReference type="ChEBI" id="CHEBI:29105"/>
        <dbReference type="ChEBI" id="CHEBI:30616"/>
        <dbReference type="ChEBI" id="CHEBI:43474"/>
        <dbReference type="ChEBI" id="CHEBI:456216"/>
        <dbReference type="EC" id="7.2.2.20"/>
    </reaction>
</comment>
<comment type="subunit">
    <text evidence="1">The complex is composed of two ATP-binding proteins (ZnuC), two transmembrane proteins (ZnuB) and a solute-binding protein (ZnuA).</text>
</comment>
<comment type="subcellular location">
    <subcellularLocation>
        <location evidence="1">Cell inner membrane</location>
        <topology evidence="1">Peripheral membrane protein</topology>
    </subcellularLocation>
</comment>
<comment type="similarity">
    <text evidence="1">Belongs to the ABC transporter superfamily. Zinc importer (TC 3.A.1.15.5) family.</text>
</comment>
<comment type="sequence caution" evidence="2">
    <conflict type="erroneous initiation">
        <sequence resource="EMBL-CDS" id="ABE57553"/>
    </conflict>
</comment>
<dbReference type="EC" id="7.2.2.20" evidence="1"/>
<dbReference type="EMBL" id="CP000285">
    <property type="protein sequence ID" value="ABE57553.1"/>
    <property type="status" value="ALT_INIT"/>
    <property type="molecule type" value="Genomic_DNA"/>
</dbReference>
<dbReference type="RefSeq" id="WP_043557851.1">
    <property type="nucleotide sequence ID" value="NC_007963.1"/>
</dbReference>
<dbReference type="SMR" id="Q1R155"/>
<dbReference type="STRING" id="290398.Csal_0189"/>
<dbReference type="GeneID" id="95332938"/>
<dbReference type="KEGG" id="csa:Csal_0189"/>
<dbReference type="eggNOG" id="COG1121">
    <property type="taxonomic scope" value="Bacteria"/>
</dbReference>
<dbReference type="HOGENOM" id="CLU_000604_1_11_6"/>
<dbReference type="OrthoDB" id="9780942at2"/>
<dbReference type="Proteomes" id="UP000000239">
    <property type="component" value="Chromosome"/>
</dbReference>
<dbReference type="GO" id="GO:0005886">
    <property type="term" value="C:plasma membrane"/>
    <property type="evidence" value="ECO:0007669"/>
    <property type="project" value="UniProtKB-SubCell"/>
</dbReference>
<dbReference type="GO" id="GO:0015633">
    <property type="term" value="F:ABC-type zinc transporter activity"/>
    <property type="evidence" value="ECO:0007669"/>
    <property type="project" value="UniProtKB-EC"/>
</dbReference>
<dbReference type="GO" id="GO:0005524">
    <property type="term" value="F:ATP binding"/>
    <property type="evidence" value="ECO:0007669"/>
    <property type="project" value="UniProtKB-KW"/>
</dbReference>
<dbReference type="GO" id="GO:0016887">
    <property type="term" value="F:ATP hydrolysis activity"/>
    <property type="evidence" value="ECO:0007669"/>
    <property type="project" value="InterPro"/>
</dbReference>
<dbReference type="GO" id="GO:0010043">
    <property type="term" value="P:response to zinc ion"/>
    <property type="evidence" value="ECO:0007669"/>
    <property type="project" value="TreeGrafter"/>
</dbReference>
<dbReference type="Gene3D" id="3.40.50.300">
    <property type="entry name" value="P-loop containing nucleotide triphosphate hydrolases"/>
    <property type="match status" value="1"/>
</dbReference>
<dbReference type="InterPro" id="IPR003593">
    <property type="entry name" value="AAA+_ATPase"/>
</dbReference>
<dbReference type="InterPro" id="IPR003439">
    <property type="entry name" value="ABC_transporter-like_ATP-bd"/>
</dbReference>
<dbReference type="InterPro" id="IPR017871">
    <property type="entry name" value="ABC_transporter-like_CS"/>
</dbReference>
<dbReference type="InterPro" id="IPR050153">
    <property type="entry name" value="Metal_Ion_Import_ABC"/>
</dbReference>
<dbReference type="InterPro" id="IPR027417">
    <property type="entry name" value="P-loop_NTPase"/>
</dbReference>
<dbReference type="PANTHER" id="PTHR42734">
    <property type="entry name" value="METAL TRANSPORT SYSTEM ATP-BINDING PROTEIN TM_0124-RELATED"/>
    <property type="match status" value="1"/>
</dbReference>
<dbReference type="PANTHER" id="PTHR42734:SF9">
    <property type="entry name" value="ZINC IMPORT ATP-BINDING PROTEIN ZNUC"/>
    <property type="match status" value="1"/>
</dbReference>
<dbReference type="Pfam" id="PF00005">
    <property type="entry name" value="ABC_tran"/>
    <property type="match status" value="1"/>
</dbReference>
<dbReference type="SMART" id="SM00382">
    <property type="entry name" value="AAA"/>
    <property type="match status" value="1"/>
</dbReference>
<dbReference type="SUPFAM" id="SSF52540">
    <property type="entry name" value="P-loop containing nucleoside triphosphate hydrolases"/>
    <property type="match status" value="1"/>
</dbReference>
<dbReference type="PROSITE" id="PS00211">
    <property type="entry name" value="ABC_TRANSPORTER_1"/>
    <property type="match status" value="1"/>
</dbReference>
<dbReference type="PROSITE" id="PS50893">
    <property type="entry name" value="ABC_TRANSPORTER_2"/>
    <property type="match status" value="1"/>
</dbReference>
<dbReference type="PROSITE" id="PS51298">
    <property type="entry name" value="ZNUC"/>
    <property type="match status" value="1"/>
</dbReference>
<name>ZNUC_CHRSD</name>
<keyword id="KW-0067">ATP-binding</keyword>
<keyword id="KW-0997">Cell inner membrane</keyword>
<keyword id="KW-1003">Cell membrane</keyword>
<keyword id="KW-0406">Ion transport</keyword>
<keyword id="KW-0472">Membrane</keyword>
<keyword id="KW-0547">Nucleotide-binding</keyword>
<keyword id="KW-1185">Reference proteome</keyword>
<keyword id="KW-1278">Translocase</keyword>
<keyword id="KW-0813">Transport</keyword>
<keyword id="KW-0862">Zinc</keyword>
<keyword id="KW-0864">Zinc transport</keyword>
<organism>
    <name type="scientific">Chromohalobacter salexigens (strain ATCC BAA-138 / DSM 3043 / CIP 106854 / NCIMB 13768 / 1H11)</name>
    <dbReference type="NCBI Taxonomy" id="290398"/>
    <lineage>
        <taxon>Bacteria</taxon>
        <taxon>Pseudomonadati</taxon>
        <taxon>Pseudomonadota</taxon>
        <taxon>Gammaproteobacteria</taxon>
        <taxon>Oceanospirillales</taxon>
        <taxon>Halomonadaceae</taxon>
        <taxon>Chromohalobacter</taxon>
    </lineage>
</organism>
<protein>
    <recommendedName>
        <fullName evidence="1">Zinc import ATP-binding protein ZnuC</fullName>
        <ecNumber evidence="1">7.2.2.20</ecNumber>
    </recommendedName>
</protein>